<evidence type="ECO:0000255" key="1">
    <source>
        <dbReference type="HAMAP-Rule" id="MF_00286"/>
    </source>
</evidence>
<dbReference type="EMBL" id="AE003849">
    <property type="protein sequence ID" value="AAF83150.1"/>
    <property type="molecule type" value="Genomic_DNA"/>
</dbReference>
<dbReference type="PIR" id="G82818">
    <property type="entry name" value="G82818"/>
</dbReference>
<dbReference type="RefSeq" id="WP_010892873.1">
    <property type="nucleotide sequence ID" value="NC_002488.3"/>
</dbReference>
<dbReference type="SMR" id="Q9PGG2"/>
<dbReference type="STRING" id="160492.XF_0340"/>
<dbReference type="KEGG" id="xfa:XF_0340"/>
<dbReference type="eggNOG" id="COG1495">
    <property type="taxonomic scope" value="Bacteria"/>
</dbReference>
<dbReference type="HOGENOM" id="CLU_098660_1_1_6"/>
<dbReference type="Proteomes" id="UP000000812">
    <property type="component" value="Chromosome"/>
</dbReference>
<dbReference type="GO" id="GO:0005886">
    <property type="term" value="C:plasma membrane"/>
    <property type="evidence" value="ECO:0007669"/>
    <property type="project" value="UniProtKB-SubCell"/>
</dbReference>
<dbReference type="GO" id="GO:0009055">
    <property type="term" value="F:electron transfer activity"/>
    <property type="evidence" value="ECO:0007669"/>
    <property type="project" value="UniProtKB-UniRule"/>
</dbReference>
<dbReference type="GO" id="GO:0015035">
    <property type="term" value="F:protein-disulfide reductase activity"/>
    <property type="evidence" value="ECO:0007669"/>
    <property type="project" value="UniProtKB-UniRule"/>
</dbReference>
<dbReference type="GO" id="GO:0006457">
    <property type="term" value="P:protein folding"/>
    <property type="evidence" value="ECO:0007669"/>
    <property type="project" value="InterPro"/>
</dbReference>
<dbReference type="Gene3D" id="1.20.1550.10">
    <property type="entry name" value="DsbB-like"/>
    <property type="match status" value="1"/>
</dbReference>
<dbReference type="HAMAP" id="MF_00286">
    <property type="entry name" value="DsbB"/>
    <property type="match status" value="1"/>
</dbReference>
<dbReference type="InterPro" id="IPR003752">
    <property type="entry name" value="DiS_bond_form_DsbB/BdbC"/>
</dbReference>
<dbReference type="InterPro" id="IPR022920">
    <property type="entry name" value="Disulphide_bond_form_DsbB"/>
</dbReference>
<dbReference type="InterPro" id="IPR050183">
    <property type="entry name" value="DsbB"/>
</dbReference>
<dbReference type="InterPro" id="IPR023380">
    <property type="entry name" value="DsbB-like_sf"/>
</dbReference>
<dbReference type="NCBIfam" id="NF003354">
    <property type="entry name" value="PRK04388.1"/>
    <property type="match status" value="1"/>
</dbReference>
<dbReference type="PANTHER" id="PTHR36570">
    <property type="entry name" value="DISULFIDE BOND FORMATION PROTEIN B"/>
    <property type="match status" value="1"/>
</dbReference>
<dbReference type="PANTHER" id="PTHR36570:SF3">
    <property type="entry name" value="DISULFIDE BOND FORMATION PROTEIN B"/>
    <property type="match status" value="1"/>
</dbReference>
<dbReference type="Pfam" id="PF02600">
    <property type="entry name" value="DsbB"/>
    <property type="match status" value="1"/>
</dbReference>
<dbReference type="SUPFAM" id="SSF158442">
    <property type="entry name" value="DsbB-like"/>
    <property type="match status" value="1"/>
</dbReference>
<name>DSBB_XYLFA</name>
<accession>Q9PGG2</accession>
<sequence>MNALQWSFRAQCLTGFLFCTGLLAYAIFLQLHQGLEPCPLCIFQRIAFAVLGILFLIAGLYNSSNVYTRKAYGLLIFLTAAIGTGIAGRHVWVQLMPHNTISSCGSPLSFLSETMGPFEVFRTVLTGTSDCGNIDWRFLGLSMPMWSMFWFVALALLGLLVGFKAERRKPLFS</sequence>
<keyword id="KW-0997">Cell inner membrane</keyword>
<keyword id="KW-1003">Cell membrane</keyword>
<keyword id="KW-0143">Chaperone</keyword>
<keyword id="KW-1015">Disulfide bond</keyword>
<keyword id="KW-0249">Electron transport</keyword>
<keyword id="KW-0472">Membrane</keyword>
<keyword id="KW-0560">Oxidoreductase</keyword>
<keyword id="KW-0676">Redox-active center</keyword>
<keyword id="KW-0812">Transmembrane</keyword>
<keyword id="KW-1133">Transmembrane helix</keyword>
<keyword id="KW-0813">Transport</keyword>
<reference key="1">
    <citation type="journal article" date="2000" name="Nature">
        <title>The genome sequence of the plant pathogen Xylella fastidiosa.</title>
        <authorList>
            <person name="Simpson A.J.G."/>
            <person name="Reinach F.C."/>
            <person name="Arruda P."/>
            <person name="Abreu F.A."/>
            <person name="Acencio M."/>
            <person name="Alvarenga R."/>
            <person name="Alves L.M.C."/>
            <person name="Araya J.E."/>
            <person name="Baia G.S."/>
            <person name="Baptista C.S."/>
            <person name="Barros M.H."/>
            <person name="Bonaccorsi E.D."/>
            <person name="Bordin S."/>
            <person name="Bove J.M."/>
            <person name="Briones M.R.S."/>
            <person name="Bueno M.R.P."/>
            <person name="Camargo A.A."/>
            <person name="Camargo L.E.A."/>
            <person name="Carraro D.M."/>
            <person name="Carrer H."/>
            <person name="Colauto N.B."/>
            <person name="Colombo C."/>
            <person name="Costa F.F."/>
            <person name="Costa M.C.R."/>
            <person name="Costa-Neto C.M."/>
            <person name="Coutinho L.L."/>
            <person name="Cristofani M."/>
            <person name="Dias-Neto E."/>
            <person name="Docena C."/>
            <person name="El-Dorry H."/>
            <person name="Facincani A.P."/>
            <person name="Ferreira A.J.S."/>
            <person name="Ferreira V.C.A."/>
            <person name="Ferro J.A."/>
            <person name="Fraga J.S."/>
            <person name="Franca S.C."/>
            <person name="Franco M.C."/>
            <person name="Frohme M."/>
            <person name="Furlan L.R."/>
            <person name="Garnier M."/>
            <person name="Goldman G.H."/>
            <person name="Goldman M.H.S."/>
            <person name="Gomes S.L."/>
            <person name="Gruber A."/>
            <person name="Ho P.L."/>
            <person name="Hoheisel J.D."/>
            <person name="Junqueira M.L."/>
            <person name="Kemper E.L."/>
            <person name="Kitajima J.P."/>
            <person name="Krieger J.E."/>
            <person name="Kuramae E.E."/>
            <person name="Laigret F."/>
            <person name="Lambais M.R."/>
            <person name="Leite L.C.C."/>
            <person name="Lemos E.G.M."/>
            <person name="Lemos M.V.F."/>
            <person name="Lopes S.A."/>
            <person name="Lopes C.R."/>
            <person name="Machado J.A."/>
            <person name="Machado M.A."/>
            <person name="Madeira A.M.B.N."/>
            <person name="Madeira H.M.F."/>
            <person name="Marino C.L."/>
            <person name="Marques M.V."/>
            <person name="Martins E.A.L."/>
            <person name="Martins E.M.F."/>
            <person name="Matsukuma A.Y."/>
            <person name="Menck C.F.M."/>
            <person name="Miracca E.C."/>
            <person name="Miyaki C.Y."/>
            <person name="Monteiro-Vitorello C.B."/>
            <person name="Moon D.H."/>
            <person name="Nagai M.A."/>
            <person name="Nascimento A.L.T.O."/>
            <person name="Netto L.E.S."/>
            <person name="Nhani A. Jr."/>
            <person name="Nobrega F.G."/>
            <person name="Nunes L.R."/>
            <person name="Oliveira M.A."/>
            <person name="de Oliveira M.C."/>
            <person name="de Oliveira R.C."/>
            <person name="Palmieri D.A."/>
            <person name="Paris A."/>
            <person name="Peixoto B.R."/>
            <person name="Pereira G.A.G."/>
            <person name="Pereira H.A. Jr."/>
            <person name="Pesquero J.B."/>
            <person name="Quaggio R.B."/>
            <person name="Roberto P.G."/>
            <person name="Rodrigues V."/>
            <person name="de Rosa A.J.M."/>
            <person name="de Rosa V.E. Jr."/>
            <person name="de Sa R.G."/>
            <person name="Santelli R.V."/>
            <person name="Sawasaki H.E."/>
            <person name="da Silva A.C.R."/>
            <person name="da Silva A.M."/>
            <person name="da Silva F.R."/>
            <person name="Silva W.A. Jr."/>
            <person name="da Silveira J.F."/>
            <person name="Silvestri M.L.Z."/>
            <person name="Siqueira W.J."/>
            <person name="de Souza A.A."/>
            <person name="de Souza A.P."/>
            <person name="Terenzi M.F."/>
            <person name="Truffi D."/>
            <person name="Tsai S.M."/>
            <person name="Tsuhako M.H."/>
            <person name="Vallada H."/>
            <person name="Van Sluys M.A."/>
            <person name="Verjovski-Almeida S."/>
            <person name="Vettore A.L."/>
            <person name="Zago M.A."/>
            <person name="Zatz M."/>
            <person name="Meidanis J."/>
            <person name="Setubal J.C."/>
        </authorList>
    </citation>
    <scope>NUCLEOTIDE SEQUENCE [LARGE SCALE GENOMIC DNA]</scope>
    <source>
        <strain>9a5c</strain>
    </source>
</reference>
<feature type="chain" id="PRO_0000059367" description="Disulfide bond formation protein B">
    <location>
        <begin position="1"/>
        <end position="173"/>
    </location>
</feature>
<feature type="topological domain" description="Cytoplasmic" evidence="1">
    <location>
        <begin position="1"/>
        <end position="11"/>
    </location>
</feature>
<feature type="transmembrane region" description="Helical" evidence="1">
    <location>
        <begin position="12"/>
        <end position="28"/>
    </location>
</feature>
<feature type="topological domain" description="Periplasmic" evidence="1">
    <location>
        <begin position="29"/>
        <end position="46"/>
    </location>
</feature>
<feature type="transmembrane region" description="Helical" evidence="1">
    <location>
        <begin position="47"/>
        <end position="63"/>
    </location>
</feature>
<feature type="topological domain" description="Cytoplasmic" evidence="1">
    <location>
        <begin position="64"/>
        <end position="70"/>
    </location>
</feature>
<feature type="transmembrane region" description="Helical" evidence="1">
    <location>
        <begin position="71"/>
        <end position="88"/>
    </location>
</feature>
<feature type="topological domain" description="Periplasmic" evidence="1">
    <location>
        <begin position="89"/>
        <end position="145"/>
    </location>
</feature>
<feature type="transmembrane region" description="Helical" evidence="1">
    <location>
        <begin position="146"/>
        <end position="164"/>
    </location>
</feature>
<feature type="topological domain" description="Cytoplasmic" evidence="1">
    <location>
        <begin position="165"/>
        <end position="173"/>
    </location>
</feature>
<feature type="disulfide bond" description="Redox-active" evidence="1">
    <location>
        <begin position="38"/>
        <end position="41"/>
    </location>
</feature>
<feature type="disulfide bond" description="Redox-active" evidence="1">
    <location>
        <begin position="104"/>
        <end position="131"/>
    </location>
</feature>
<organism>
    <name type="scientific">Xylella fastidiosa (strain 9a5c)</name>
    <dbReference type="NCBI Taxonomy" id="160492"/>
    <lineage>
        <taxon>Bacteria</taxon>
        <taxon>Pseudomonadati</taxon>
        <taxon>Pseudomonadota</taxon>
        <taxon>Gammaproteobacteria</taxon>
        <taxon>Lysobacterales</taxon>
        <taxon>Lysobacteraceae</taxon>
        <taxon>Xylella</taxon>
    </lineage>
</organism>
<gene>
    <name evidence="1" type="primary">dsbB</name>
    <name type="ordered locus">XF_0340</name>
</gene>
<protein>
    <recommendedName>
        <fullName evidence="1">Disulfide bond formation protein B</fullName>
    </recommendedName>
    <alternativeName>
        <fullName evidence="1">Disulfide oxidoreductase</fullName>
    </alternativeName>
</protein>
<comment type="function">
    <text evidence="1">Required for disulfide bond formation in some periplasmic proteins. Acts by oxidizing the DsbA protein.</text>
</comment>
<comment type="subcellular location">
    <subcellularLocation>
        <location evidence="1">Cell inner membrane</location>
        <topology evidence="1">Multi-pass membrane protein</topology>
    </subcellularLocation>
</comment>
<comment type="similarity">
    <text evidence="1">Belongs to the DsbB family.</text>
</comment>
<proteinExistence type="inferred from homology"/>